<keyword id="KW-0067">ATP-binding</keyword>
<keyword id="KW-0436">Ligase</keyword>
<keyword id="KW-0460">Magnesium</keyword>
<keyword id="KW-0479">Metal-binding</keyword>
<keyword id="KW-0547">Nucleotide-binding</keyword>
<keyword id="KW-0816">Tricarboxylic acid cycle</keyword>
<dbReference type="EC" id="6.2.1.5" evidence="1"/>
<dbReference type="EMBL" id="CU928163">
    <property type="protein sequence ID" value="CAR12017.1"/>
    <property type="molecule type" value="Genomic_DNA"/>
</dbReference>
<dbReference type="RefSeq" id="WP_001048602.1">
    <property type="nucleotide sequence ID" value="NC_011751.1"/>
</dbReference>
<dbReference type="RefSeq" id="YP_002411563.1">
    <property type="nucleotide sequence ID" value="NC_011751.1"/>
</dbReference>
<dbReference type="SMR" id="B7N9W6"/>
<dbReference type="STRING" id="585056.ECUMN_0805"/>
<dbReference type="GeneID" id="93776757"/>
<dbReference type="KEGG" id="eum:ECUMN_0805"/>
<dbReference type="PATRIC" id="fig|585056.7.peg.1009"/>
<dbReference type="HOGENOM" id="CLU_037430_4_0_6"/>
<dbReference type="UniPathway" id="UPA00223">
    <property type="reaction ID" value="UER00999"/>
</dbReference>
<dbReference type="Proteomes" id="UP000007097">
    <property type="component" value="Chromosome"/>
</dbReference>
<dbReference type="GO" id="GO:0005829">
    <property type="term" value="C:cytosol"/>
    <property type="evidence" value="ECO:0007669"/>
    <property type="project" value="TreeGrafter"/>
</dbReference>
<dbReference type="GO" id="GO:0042709">
    <property type="term" value="C:succinate-CoA ligase complex"/>
    <property type="evidence" value="ECO:0007669"/>
    <property type="project" value="TreeGrafter"/>
</dbReference>
<dbReference type="GO" id="GO:0005524">
    <property type="term" value="F:ATP binding"/>
    <property type="evidence" value="ECO:0007669"/>
    <property type="project" value="UniProtKB-UniRule"/>
</dbReference>
<dbReference type="GO" id="GO:0000287">
    <property type="term" value="F:magnesium ion binding"/>
    <property type="evidence" value="ECO:0007669"/>
    <property type="project" value="UniProtKB-UniRule"/>
</dbReference>
<dbReference type="GO" id="GO:0004775">
    <property type="term" value="F:succinate-CoA ligase (ADP-forming) activity"/>
    <property type="evidence" value="ECO:0007669"/>
    <property type="project" value="UniProtKB-UniRule"/>
</dbReference>
<dbReference type="GO" id="GO:0004776">
    <property type="term" value="F:succinate-CoA ligase (GDP-forming) activity"/>
    <property type="evidence" value="ECO:0007669"/>
    <property type="project" value="RHEA"/>
</dbReference>
<dbReference type="GO" id="GO:0006104">
    <property type="term" value="P:succinyl-CoA metabolic process"/>
    <property type="evidence" value="ECO:0007669"/>
    <property type="project" value="TreeGrafter"/>
</dbReference>
<dbReference type="GO" id="GO:0006099">
    <property type="term" value="P:tricarboxylic acid cycle"/>
    <property type="evidence" value="ECO:0007669"/>
    <property type="project" value="UniProtKB-UniRule"/>
</dbReference>
<dbReference type="FunFam" id="3.30.1490.20:FF:000002">
    <property type="entry name" value="Succinate--CoA ligase [ADP-forming] subunit beta"/>
    <property type="match status" value="1"/>
</dbReference>
<dbReference type="FunFam" id="3.30.470.20:FF:000002">
    <property type="entry name" value="Succinate--CoA ligase [ADP-forming] subunit beta"/>
    <property type="match status" value="1"/>
</dbReference>
<dbReference type="FunFam" id="3.40.50.261:FF:000001">
    <property type="entry name" value="Succinate--CoA ligase [ADP-forming] subunit beta"/>
    <property type="match status" value="1"/>
</dbReference>
<dbReference type="Gene3D" id="3.30.1490.20">
    <property type="entry name" value="ATP-grasp fold, A domain"/>
    <property type="match status" value="1"/>
</dbReference>
<dbReference type="Gene3D" id="3.30.470.20">
    <property type="entry name" value="ATP-grasp fold, B domain"/>
    <property type="match status" value="1"/>
</dbReference>
<dbReference type="Gene3D" id="3.40.50.261">
    <property type="entry name" value="Succinyl-CoA synthetase domains"/>
    <property type="match status" value="1"/>
</dbReference>
<dbReference type="HAMAP" id="MF_00558">
    <property type="entry name" value="Succ_CoA_beta"/>
    <property type="match status" value="1"/>
</dbReference>
<dbReference type="InterPro" id="IPR011761">
    <property type="entry name" value="ATP-grasp"/>
</dbReference>
<dbReference type="InterPro" id="IPR013650">
    <property type="entry name" value="ATP-grasp_succ-CoA_synth-type"/>
</dbReference>
<dbReference type="InterPro" id="IPR013815">
    <property type="entry name" value="ATP_grasp_subdomain_1"/>
</dbReference>
<dbReference type="InterPro" id="IPR017866">
    <property type="entry name" value="Succ-CoA_synthase_bsu_CS"/>
</dbReference>
<dbReference type="InterPro" id="IPR005811">
    <property type="entry name" value="SUCC_ACL_C"/>
</dbReference>
<dbReference type="InterPro" id="IPR005809">
    <property type="entry name" value="Succ_CoA_ligase-like_bsu"/>
</dbReference>
<dbReference type="InterPro" id="IPR016102">
    <property type="entry name" value="Succinyl-CoA_synth-like"/>
</dbReference>
<dbReference type="NCBIfam" id="NF001913">
    <property type="entry name" value="PRK00696.1"/>
    <property type="match status" value="1"/>
</dbReference>
<dbReference type="NCBIfam" id="TIGR01016">
    <property type="entry name" value="sucCoAbeta"/>
    <property type="match status" value="1"/>
</dbReference>
<dbReference type="PANTHER" id="PTHR11815:SF10">
    <property type="entry name" value="SUCCINATE--COA LIGASE [GDP-FORMING] SUBUNIT BETA, MITOCHONDRIAL"/>
    <property type="match status" value="1"/>
</dbReference>
<dbReference type="PANTHER" id="PTHR11815">
    <property type="entry name" value="SUCCINYL-COA SYNTHETASE BETA CHAIN"/>
    <property type="match status" value="1"/>
</dbReference>
<dbReference type="Pfam" id="PF08442">
    <property type="entry name" value="ATP-grasp_2"/>
    <property type="match status" value="1"/>
</dbReference>
<dbReference type="Pfam" id="PF00549">
    <property type="entry name" value="Ligase_CoA"/>
    <property type="match status" value="1"/>
</dbReference>
<dbReference type="PIRSF" id="PIRSF001554">
    <property type="entry name" value="SucCS_beta"/>
    <property type="match status" value="1"/>
</dbReference>
<dbReference type="SUPFAM" id="SSF56059">
    <property type="entry name" value="Glutathione synthetase ATP-binding domain-like"/>
    <property type="match status" value="1"/>
</dbReference>
<dbReference type="SUPFAM" id="SSF52210">
    <property type="entry name" value="Succinyl-CoA synthetase domains"/>
    <property type="match status" value="1"/>
</dbReference>
<dbReference type="PROSITE" id="PS50975">
    <property type="entry name" value="ATP_GRASP"/>
    <property type="match status" value="1"/>
</dbReference>
<dbReference type="PROSITE" id="PS01217">
    <property type="entry name" value="SUCCINYL_COA_LIG_3"/>
    <property type="match status" value="1"/>
</dbReference>
<reference key="1">
    <citation type="journal article" date="2009" name="PLoS Genet.">
        <title>Organised genome dynamics in the Escherichia coli species results in highly diverse adaptive paths.</title>
        <authorList>
            <person name="Touchon M."/>
            <person name="Hoede C."/>
            <person name="Tenaillon O."/>
            <person name="Barbe V."/>
            <person name="Baeriswyl S."/>
            <person name="Bidet P."/>
            <person name="Bingen E."/>
            <person name="Bonacorsi S."/>
            <person name="Bouchier C."/>
            <person name="Bouvet O."/>
            <person name="Calteau A."/>
            <person name="Chiapello H."/>
            <person name="Clermont O."/>
            <person name="Cruveiller S."/>
            <person name="Danchin A."/>
            <person name="Diard M."/>
            <person name="Dossat C."/>
            <person name="Karoui M.E."/>
            <person name="Frapy E."/>
            <person name="Garry L."/>
            <person name="Ghigo J.M."/>
            <person name="Gilles A.M."/>
            <person name="Johnson J."/>
            <person name="Le Bouguenec C."/>
            <person name="Lescat M."/>
            <person name="Mangenot S."/>
            <person name="Martinez-Jehanne V."/>
            <person name="Matic I."/>
            <person name="Nassif X."/>
            <person name="Oztas S."/>
            <person name="Petit M.A."/>
            <person name="Pichon C."/>
            <person name="Rouy Z."/>
            <person name="Ruf C.S."/>
            <person name="Schneider D."/>
            <person name="Tourret J."/>
            <person name="Vacherie B."/>
            <person name="Vallenet D."/>
            <person name="Medigue C."/>
            <person name="Rocha E.P.C."/>
            <person name="Denamur E."/>
        </authorList>
    </citation>
    <scope>NUCLEOTIDE SEQUENCE [LARGE SCALE GENOMIC DNA]</scope>
    <source>
        <strain>UMN026 / ExPEC</strain>
    </source>
</reference>
<organism>
    <name type="scientific">Escherichia coli O17:K52:H18 (strain UMN026 / ExPEC)</name>
    <dbReference type="NCBI Taxonomy" id="585056"/>
    <lineage>
        <taxon>Bacteria</taxon>
        <taxon>Pseudomonadati</taxon>
        <taxon>Pseudomonadota</taxon>
        <taxon>Gammaproteobacteria</taxon>
        <taxon>Enterobacterales</taxon>
        <taxon>Enterobacteriaceae</taxon>
        <taxon>Escherichia</taxon>
    </lineage>
</organism>
<comment type="function">
    <text evidence="1">Succinyl-CoA synthetase functions in the citric acid cycle (TCA), coupling the hydrolysis of succinyl-CoA to the synthesis of either ATP or GTP and thus represents the only step of substrate-level phosphorylation in the TCA. The beta subunit provides nucleotide specificity of the enzyme and binds the substrate succinate, while the binding sites for coenzyme A and phosphate are found in the alpha subunit.</text>
</comment>
<comment type="catalytic activity">
    <reaction evidence="1">
        <text>succinate + ATP + CoA = succinyl-CoA + ADP + phosphate</text>
        <dbReference type="Rhea" id="RHEA:17661"/>
        <dbReference type="ChEBI" id="CHEBI:30031"/>
        <dbReference type="ChEBI" id="CHEBI:30616"/>
        <dbReference type="ChEBI" id="CHEBI:43474"/>
        <dbReference type="ChEBI" id="CHEBI:57287"/>
        <dbReference type="ChEBI" id="CHEBI:57292"/>
        <dbReference type="ChEBI" id="CHEBI:456216"/>
        <dbReference type="EC" id="6.2.1.5"/>
    </reaction>
    <physiologicalReaction direction="right-to-left" evidence="1">
        <dbReference type="Rhea" id="RHEA:17663"/>
    </physiologicalReaction>
</comment>
<comment type="catalytic activity">
    <reaction evidence="1">
        <text>GTP + succinate + CoA = succinyl-CoA + GDP + phosphate</text>
        <dbReference type="Rhea" id="RHEA:22120"/>
        <dbReference type="ChEBI" id="CHEBI:30031"/>
        <dbReference type="ChEBI" id="CHEBI:37565"/>
        <dbReference type="ChEBI" id="CHEBI:43474"/>
        <dbReference type="ChEBI" id="CHEBI:57287"/>
        <dbReference type="ChEBI" id="CHEBI:57292"/>
        <dbReference type="ChEBI" id="CHEBI:58189"/>
    </reaction>
    <physiologicalReaction direction="right-to-left" evidence="1">
        <dbReference type="Rhea" id="RHEA:22122"/>
    </physiologicalReaction>
</comment>
<comment type="cofactor">
    <cofactor evidence="1">
        <name>Mg(2+)</name>
        <dbReference type="ChEBI" id="CHEBI:18420"/>
    </cofactor>
    <text evidence="1">Binds 1 Mg(2+) ion per subunit.</text>
</comment>
<comment type="pathway">
    <text evidence="1">Carbohydrate metabolism; tricarboxylic acid cycle; succinate from succinyl-CoA (ligase route): step 1/1.</text>
</comment>
<comment type="subunit">
    <text evidence="1">Heterotetramer of two alpha and two beta subunits.</text>
</comment>
<comment type="similarity">
    <text evidence="1">Belongs to the succinate/malate CoA ligase beta subunit family.</text>
</comment>
<sequence length="388" mass="41393">MNLHEYQAKQLFARYGLPAPVGYACTTPREAEEAASKIGAGPWVVKCQVHAGGRGKAGGVKVVNSKEDIRAFAENWLGKRLVTYQTDANGQPVNQILVEAATDIAKELYLGAVVDRSSRRVVFMASTEGGVEIEKVAEETPHLIHKVALDPLTGPMPYQGRELAFKLGLEGKLVQQFTKIFMGLATIFLERDLALIEINPLVITKQGDLICLDGKLGADGNALFRQPDLREMRDQSQEDPREAQAAQWELNYVALDGNIGCMVNGAGLAMGTMDIVKLHGGEPANFLDVGGGATKERVTEAFKIILSDDKVKAVLVNIFGGIVRCDLIADGIIGAVAEVGVNVPVVVRLEGNNAELGAKKLADSGLNIIAAKGLTDAAQQVVAAVEGK</sequence>
<name>SUCC_ECOLU</name>
<proteinExistence type="inferred from homology"/>
<gene>
    <name evidence="1" type="primary">sucC</name>
    <name type="ordered locus">ECUMN_0805</name>
</gene>
<feature type="chain" id="PRO_1000129186" description="Succinate--CoA ligase [ADP-forming] subunit beta">
    <location>
        <begin position="1"/>
        <end position="388"/>
    </location>
</feature>
<feature type="domain" description="ATP-grasp" evidence="1">
    <location>
        <begin position="9"/>
        <end position="244"/>
    </location>
</feature>
<feature type="binding site" evidence="1">
    <location>
        <position position="46"/>
    </location>
    <ligand>
        <name>ATP</name>
        <dbReference type="ChEBI" id="CHEBI:30616"/>
    </ligand>
</feature>
<feature type="binding site" evidence="1">
    <location>
        <begin position="53"/>
        <end position="55"/>
    </location>
    <ligand>
        <name>ATP</name>
        <dbReference type="ChEBI" id="CHEBI:30616"/>
    </ligand>
</feature>
<feature type="binding site" evidence="1">
    <location>
        <position position="99"/>
    </location>
    <ligand>
        <name>ATP</name>
        <dbReference type="ChEBI" id="CHEBI:30616"/>
    </ligand>
</feature>
<feature type="binding site" evidence="1">
    <location>
        <position position="102"/>
    </location>
    <ligand>
        <name>ATP</name>
        <dbReference type="ChEBI" id="CHEBI:30616"/>
    </ligand>
</feature>
<feature type="binding site" evidence="1">
    <location>
        <position position="107"/>
    </location>
    <ligand>
        <name>ATP</name>
        <dbReference type="ChEBI" id="CHEBI:30616"/>
    </ligand>
</feature>
<feature type="binding site" evidence="1">
    <location>
        <position position="199"/>
    </location>
    <ligand>
        <name>Mg(2+)</name>
        <dbReference type="ChEBI" id="CHEBI:18420"/>
    </ligand>
</feature>
<feature type="binding site" evidence="1">
    <location>
        <position position="213"/>
    </location>
    <ligand>
        <name>Mg(2+)</name>
        <dbReference type="ChEBI" id="CHEBI:18420"/>
    </ligand>
</feature>
<feature type="binding site" evidence="1">
    <location>
        <position position="264"/>
    </location>
    <ligand>
        <name>substrate</name>
        <note>ligand shared with subunit alpha</note>
    </ligand>
</feature>
<feature type="binding site" evidence="1">
    <location>
        <begin position="321"/>
        <end position="323"/>
    </location>
    <ligand>
        <name>substrate</name>
        <note>ligand shared with subunit alpha</note>
    </ligand>
</feature>
<accession>B7N9W6</accession>
<evidence type="ECO:0000255" key="1">
    <source>
        <dbReference type="HAMAP-Rule" id="MF_00558"/>
    </source>
</evidence>
<protein>
    <recommendedName>
        <fullName evidence="1">Succinate--CoA ligase [ADP-forming] subunit beta</fullName>
        <ecNumber evidence="1">6.2.1.5</ecNumber>
    </recommendedName>
    <alternativeName>
        <fullName evidence="1">Succinyl-CoA synthetase subunit beta</fullName>
        <shortName evidence="1">SCS-beta</shortName>
    </alternativeName>
</protein>